<keyword id="KW-0520">NAD</keyword>
<keyword id="KW-0560">Oxidoreductase</keyword>
<keyword id="KW-1185">Reference proteome</keyword>
<accession>Q32FQ5</accession>
<feature type="chain" id="PRO_0000269701" description="Gamma-aminobutyraldehyde dehydrogenase">
    <location>
        <begin position="1"/>
        <end position="474"/>
    </location>
</feature>
<feature type="active site" evidence="1">
    <location>
        <position position="246"/>
    </location>
</feature>
<feature type="active site" description="Nucleophile" evidence="1">
    <location>
        <position position="280"/>
    </location>
</feature>
<feature type="binding site" evidence="1">
    <location>
        <begin position="146"/>
        <end position="148"/>
    </location>
    <ligand>
        <name>NAD(+)</name>
        <dbReference type="ChEBI" id="CHEBI:57540"/>
    </ligand>
</feature>
<feature type="binding site" evidence="1">
    <location>
        <begin position="172"/>
        <end position="175"/>
    </location>
    <ligand>
        <name>NAD(+)</name>
        <dbReference type="ChEBI" id="CHEBI:57540"/>
    </ligand>
</feature>
<feature type="binding site" evidence="1">
    <location>
        <position position="209"/>
    </location>
    <ligand>
        <name>NAD(+)</name>
        <dbReference type="ChEBI" id="CHEBI:57540"/>
    </ligand>
</feature>
<feature type="binding site" evidence="1">
    <location>
        <begin position="225"/>
        <end position="228"/>
    </location>
    <ligand>
        <name>NAD(+)</name>
        <dbReference type="ChEBI" id="CHEBI:57540"/>
    </ligand>
</feature>
<feature type="binding site" evidence="1">
    <location>
        <position position="280"/>
    </location>
    <ligand>
        <name>NAD(+)</name>
        <dbReference type="ChEBI" id="CHEBI:57540"/>
    </ligand>
</feature>
<proteinExistence type="inferred from homology"/>
<sequence length="474" mass="50881">MQHKLLINGELVSGEGEKQPVYNPATGDVLLEIAEASAEQVDAAVRAADAAFAEWGQTTPKVRAECLLKLADVIEENGQVFAELESRNCGKPLHSAFNDEIPAIVDVFRFFAGAARCLNGLAVGEYLEGHTSMIRRDPLGVVASIAPWNYLLMMAAWKLAPALAAGNCVVLKPSEITPLTALKLAELAKDIFPAGVINVLFGRGKTVGDPLTGHPKVRMVSLTGSIATGEHIISHTAPSIKRTHMELGGKAPVIVFDDANIEAVVEGVRTFGYYNAGQDCTAACRIYAQKGIYDTLVEKLGAAVATLKSGAPDDESTELGPLSSLAHLERVSKAVEEAKATGHIKVITGGEKRKGNGYYYAPTLLAGALQDDAIVQKEVFGPVVSVTPFDNEEQVVNWANDSQYGLASSVWTKDVGRAHRVSARLQYGCTWVNTHFILVSEMPHGGQKLSGYGKDMSLYGLEDYTVVRHVMVKH</sequence>
<gene>
    <name evidence="1" type="primary">patD</name>
    <name type="ordered locus">SDY_1730</name>
</gene>
<dbReference type="EC" id="1.2.1.19" evidence="1"/>
<dbReference type="EC" id="1.2.1.-" evidence="1"/>
<dbReference type="EMBL" id="CP000034">
    <property type="protein sequence ID" value="ABB61850.1"/>
    <property type="molecule type" value="Genomic_DNA"/>
</dbReference>
<dbReference type="RefSeq" id="WP_001163896.1">
    <property type="nucleotide sequence ID" value="NC_007606.1"/>
</dbReference>
<dbReference type="RefSeq" id="YP_403341.1">
    <property type="nucleotide sequence ID" value="NC_007606.1"/>
</dbReference>
<dbReference type="SMR" id="Q32FQ5"/>
<dbReference type="STRING" id="300267.SDY_1730"/>
<dbReference type="EnsemblBacteria" id="ABB61850">
    <property type="protein sequence ID" value="ABB61850"/>
    <property type="gene ID" value="SDY_1730"/>
</dbReference>
<dbReference type="KEGG" id="sdy:SDY_1730"/>
<dbReference type="PATRIC" id="fig|300267.13.peg.2086"/>
<dbReference type="HOGENOM" id="CLU_005391_1_0_6"/>
<dbReference type="UniPathway" id="UPA00188">
    <property type="reaction ID" value="UER00292"/>
</dbReference>
<dbReference type="Proteomes" id="UP000002716">
    <property type="component" value="Chromosome"/>
</dbReference>
<dbReference type="GO" id="GO:0019145">
    <property type="term" value="F:aminobutyraldehyde dehydrogenase (NAD+) activity"/>
    <property type="evidence" value="ECO:0007669"/>
    <property type="project" value="UniProtKB-UniRule"/>
</dbReference>
<dbReference type="GO" id="GO:0051287">
    <property type="term" value="F:NAD binding"/>
    <property type="evidence" value="ECO:0007669"/>
    <property type="project" value="UniProtKB-UniRule"/>
</dbReference>
<dbReference type="GO" id="GO:0019477">
    <property type="term" value="P:L-lysine catabolic process"/>
    <property type="evidence" value="ECO:0007669"/>
    <property type="project" value="UniProtKB-UniRule"/>
</dbReference>
<dbReference type="GO" id="GO:0009447">
    <property type="term" value="P:putrescine catabolic process"/>
    <property type="evidence" value="ECO:0007669"/>
    <property type="project" value="UniProtKB-UniRule"/>
</dbReference>
<dbReference type="CDD" id="cd07092">
    <property type="entry name" value="ALDH_ABALDH-YdcW"/>
    <property type="match status" value="1"/>
</dbReference>
<dbReference type="FunFam" id="3.40.605.10:FF:000001">
    <property type="entry name" value="Aldehyde dehydrogenase 1"/>
    <property type="match status" value="1"/>
</dbReference>
<dbReference type="FunFam" id="3.40.309.10:FF:000010">
    <property type="entry name" value="Gamma-aminobutyraldehyde dehydrogenase"/>
    <property type="match status" value="1"/>
</dbReference>
<dbReference type="Gene3D" id="3.40.605.10">
    <property type="entry name" value="Aldehyde Dehydrogenase, Chain A, domain 1"/>
    <property type="match status" value="1"/>
</dbReference>
<dbReference type="Gene3D" id="3.40.309.10">
    <property type="entry name" value="Aldehyde Dehydrogenase, Chain A, domain 2"/>
    <property type="match status" value="1"/>
</dbReference>
<dbReference type="HAMAP" id="MF_01275">
    <property type="entry name" value="Aldedh_Prr"/>
    <property type="match status" value="1"/>
</dbReference>
<dbReference type="InterPro" id="IPR016161">
    <property type="entry name" value="Ald_DH/histidinol_DH"/>
</dbReference>
<dbReference type="InterPro" id="IPR016163">
    <property type="entry name" value="Ald_DH_C"/>
</dbReference>
<dbReference type="InterPro" id="IPR029510">
    <property type="entry name" value="Ald_DH_CS_GLU"/>
</dbReference>
<dbReference type="InterPro" id="IPR016162">
    <property type="entry name" value="Ald_DH_N"/>
</dbReference>
<dbReference type="InterPro" id="IPR015590">
    <property type="entry name" value="Aldehyde_DH_dom"/>
</dbReference>
<dbReference type="InterPro" id="IPR015657">
    <property type="entry name" value="Aminobutyraldehyde_DH"/>
</dbReference>
<dbReference type="InterPro" id="IPR017749">
    <property type="entry name" value="PatD"/>
</dbReference>
<dbReference type="NCBIfam" id="TIGR03374">
    <property type="entry name" value="ABALDH"/>
    <property type="match status" value="1"/>
</dbReference>
<dbReference type="NCBIfam" id="NF010000">
    <property type="entry name" value="PRK13473.1"/>
    <property type="match status" value="1"/>
</dbReference>
<dbReference type="PANTHER" id="PTHR11699">
    <property type="entry name" value="ALDEHYDE DEHYDROGENASE-RELATED"/>
    <property type="match status" value="1"/>
</dbReference>
<dbReference type="Pfam" id="PF00171">
    <property type="entry name" value="Aldedh"/>
    <property type="match status" value="1"/>
</dbReference>
<dbReference type="SUPFAM" id="SSF53720">
    <property type="entry name" value="ALDH-like"/>
    <property type="match status" value="1"/>
</dbReference>
<dbReference type="PROSITE" id="PS00687">
    <property type="entry name" value="ALDEHYDE_DEHYDR_GLU"/>
    <property type="match status" value="1"/>
</dbReference>
<protein>
    <recommendedName>
        <fullName evidence="1">Gamma-aminobutyraldehyde dehydrogenase</fullName>
        <shortName evidence="1">ABALDH</shortName>
        <ecNumber evidence="1">1.2.1.19</ecNumber>
    </recommendedName>
    <alternativeName>
        <fullName evidence="1">1-pyrroline dehydrogenase</fullName>
    </alternativeName>
    <alternativeName>
        <fullName evidence="1">4-aminobutanal dehydrogenase</fullName>
    </alternativeName>
    <alternativeName>
        <fullName evidence="1">5-aminopentanal dehydrogenase</fullName>
        <ecNumber evidence="1">1.2.1.-</ecNumber>
    </alternativeName>
</protein>
<evidence type="ECO:0000255" key="1">
    <source>
        <dbReference type="HAMAP-Rule" id="MF_01275"/>
    </source>
</evidence>
<organism>
    <name type="scientific">Shigella dysenteriae serotype 1 (strain Sd197)</name>
    <dbReference type="NCBI Taxonomy" id="300267"/>
    <lineage>
        <taxon>Bacteria</taxon>
        <taxon>Pseudomonadati</taxon>
        <taxon>Pseudomonadota</taxon>
        <taxon>Gammaproteobacteria</taxon>
        <taxon>Enterobacterales</taxon>
        <taxon>Enterobacteriaceae</taxon>
        <taxon>Shigella</taxon>
    </lineage>
</organism>
<name>ABDH_SHIDS</name>
<comment type="function">
    <text evidence="1">Catalyzes the oxidation 4-aminobutanal (gamma-aminobutyraldehyde) to 4-aminobutanoate (gamma-aminobutyrate or GABA). This is the second step in one of two pathways for putrescine degradation, where putrescine is converted into 4-aminobutanoate via 4-aminobutanal. Also functions as a 5-aminopentanal dehydrogenase in a a L-lysine degradation pathway to succinate that proceeds via cadaverine, glutarate and L-2-hydroxyglutarate.</text>
</comment>
<comment type="catalytic activity">
    <reaction evidence="1">
        <text>4-aminobutanal + NAD(+) + H2O = 4-aminobutanoate + NADH + 2 H(+)</text>
        <dbReference type="Rhea" id="RHEA:19105"/>
        <dbReference type="ChEBI" id="CHEBI:15377"/>
        <dbReference type="ChEBI" id="CHEBI:15378"/>
        <dbReference type="ChEBI" id="CHEBI:57540"/>
        <dbReference type="ChEBI" id="CHEBI:57945"/>
        <dbReference type="ChEBI" id="CHEBI:58264"/>
        <dbReference type="ChEBI" id="CHEBI:59888"/>
        <dbReference type="EC" id="1.2.1.19"/>
    </reaction>
    <physiologicalReaction direction="left-to-right" evidence="1">
        <dbReference type="Rhea" id="RHEA:19106"/>
    </physiologicalReaction>
</comment>
<comment type="catalytic activity">
    <reaction evidence="1">
        <text>5-aminopentanal + NAD(+) + H2O = 5-aminopentanoate + NADH + 2 H(+)</text>
        <dbReference type="Rhea" id="RHEA:61632"/>
        <dbReference type="ChEBI" id="CHEBI:15377"/>
        <dbReference type="ChEBI" id="CHEBI:15378"/>
        <dbReference type="ChEBI" id="CHEBI:57540"/>
        <dbReference type="ChEBI" id="CHEBI:57945"/>
        <dbReference type="ChEBI" id="CHEBI:144896"/>
        <dbReference type="ChEBI" id="CHEBI:356010"/>
    </reaction>
    <physiologicalReaction direction="left-to-right" evidence="1">
        <dbReference type="Rhea" id="RHEA:61633"/>
    </physiologicalReaction>
</comment>
<comment type="pathway">
    <text evidence="1">Amine and polyamine degradation; putrescine degradation; 4-aminobutanoate from 4-aminobutanal: step 1/1.</text>
</comment>
<comment type="pathway">
    <text evidence="1">Amino-acid degradation.</text>
</comment>
<comment type="subunit">
    <text evidence="1">Homotetramer.</text>
</comment>
<comment type="miscellaneous">
    <text evidence="1">4-aminobutanal can spontaneously cyclize to 1-pyrroline, and 5-aminopentanal to 1-piperideine.</text>
</comment>
<comment type="similarity">
    <text evidence="1">Belongs to the aldehyde dehydrogenase family. Gamma-aminobutyraldehyde dehydrogenase subfamily.</text>
</comment>
<reference key="1">
    <citation type="journal article" date="2005" name="Nucleic Acids Res.">
        <title>Genome dynamics and diversity of Shigella species, the etiologic agents of bacillary dysentery.</title>
        <authorList>
            <person name="Yang F."/>
            <person name="Yang J."/>
            <person name="Zhang X."/>
            <person name="Chen L."/>
            <person name="Jiang Y."/>
            <person name="Yan Y."/>
            <person name="Tang X."/>
            <person name="Wang J."/>
            <person name="Xiong Z."/>
            <person name="Dong J."/>
            <person name="Xue Y."/>
            <person name="Zhu Y."/>
            <person name="Xu X."/>
            <person name="Sun L."/>
            <person name="Chen S."/>
            <person name="Nie H."/>
            <person name="Peng J."/>
            <person name="Xu J."/>
            <person name="Wang Y."/>
            <person name="Yuan Z."/>
            <person name="Wen Y."/>
            <person name="Yao Z."/>
            <person name="Shen Y."/>
            <person name="Qiang B."/>
            <person name="Hou Y."/>
            <person name="Yu J."/>
            <person name="Jin Q."/>
        </authorList>
    </citation>
    <scope>NUCLEOTIDE SEQUENCE [LARGE SCALE GENOMIC DNA]</scope>
    <source>
        <strain>Sd197</strain>
    </source>
</reference>